<gene>
    <name evidence="1" type="primary">fabA</name>
    <name type="ordered locus">PC1_2552</name>
</gene>
<comment type="function">
    <text evidence="1">Necessary for the introduction of cis unsaturation into fatty acids. Catalyzes the dehydration of (3R)-3-hydroxydecanoyl-ACP to E-(2)-decenoyl-ACP and then its isomerization to Z-(3)-decenoyl-ACP. Can catalyze the dehydratase reaction for beta-hydroxyacyl-ACPs with saturated chain lengths up to 16:0, being most active on intermediate chain length.</text>
</comment>
<comment type="catalytic activity">
    <reaction evidence="1">
        <text>a (3R)-hydroxyacyl-[ACP] = a (2E)-enoyl-[ACP] + H2O</text>
        <dbReference type="Rhea" id="RHEA:13097"/>
        <dbReference type="Rhea" id="RHEA-COMP:9925"/>
        <dbReference type="Rhea" id="RHEA-COMP:9945"/>
        <dbReference type="ChEBI" id="CHEBI:15377"/>
        <dbReference type="ChEBI" id="CHEBI:78784"/>
        <dbReference type="ChEBI" id="CHEBI:78827"/>
        <dbReference type="EC" id="4.2.1.59"/>
    </reaction>
</comment>
<comment type="catalytic activity">
    <reaction evidence="1">
        <text>(3R)-hydroxydecanoyl-[ACP] = (2E)-decenoyl-[ACP] + H2O</text>
        <dbReference type="Rhea" id="RHEA:41860"/>
        <dbReference type="Rhea" id="RHEA-COMP:9638"/>
        <dbReference type="Rhea" id="RHEA-COMP:9639"/>
        <dbReference type="ChEBI" id="CHEBI:15377"/>
        <dbReference type="ChEBI" id="CHEBI:78466"/>
        <dbReference type="ChEBI" id="CHEBI:78467"/>
    </reaction>
</comment>
<comment type="catalytic activity">
    <reaction evidence="1">
        <text>(2E)-decenoyl-[ACP] = (3Z)-decenoyl-[ACP]</text>
        <dbReference type="Rhea" id="RHEA:23568"/>
        <dbReference type="Rhea" id="RHEA-COMP:9639"/>
        <dbReference type="Rhea" id="RHEA-COMP:9927"/>
        <dbReference type="ChEBI" id="CHEBI:78467"/>
        <dbReference type="ChEBI" id="CHEBI:78798"/>
        <dbReference type="EC" id="5.3.3.14"/>
    </reaction>
</comment>
<comment type="pathway">
    <text evidence="1">Lipid metabolism; fatty acid biosynthesis.</text>
</comment>
<comment type="subunit">
    <text evidence="1">Homodimer.</text>
</comment>
<comment type="subcellular location">
    <subcellularLocation>
        <location evidence="1">Cytoplasm</location>
    </subcellularLocation>
</comment>
<comment type="similarity">
    <text evidence="1">Belongs to the thioester dehydratase family. FabA subfamily.</text>
</comment>
<proteinExistence type="inferred from homology"/>
<organism>
    <name type="scientific">Pectobacterium carotovorum subsp. carotovorum (strain PC1)</name>
    <dbReference type="NCBI Taxonomy" id="561230"/>
    <lineage>
        <taxon>Bacteria</taxon>
        <taxon>Pseudomonadati</taxon>
        <taxon>Pseudomonadota</taxon>
        <taxon>Gammaproteobacteria</taxon>
        <taxon>Enterobacterales</taxon>
        <taxon>Pectobacteriaceae</taxon>
        <taxon>Pectobacterium</taxon>
    </lineage>
</organism>
<reference key="1">
    <citation type="submission" date="2009-07" db="EMBL/GenBank/DDBJ databases">
        <title>Complete sequence of Pectobacterium carotovorum subsp. carotovorum PC1.</title>
        <authorList>
            <consortium name="US DOE Joint Genome Institute"/>
            <person name="Lucas S."/>
            <person name="Copeland A."/>
            <person name="Lapidus A."/>
            <person name="Glavina del Rio T."/>
            <person name="Tice H."/>
            <person name="Bruce D."/>
            <person name="Goodwin L."/>
            <person name="Pitluck S."/>
            <person name="Munk A.C."/>
            <person name="Brettin T."/>
            <person name="Detter J.C."/>
            <person name="Han C."/>
            <person name="Tapia R."/>
            <person name="Larimer F."/>
            <person name="Land M."/>
            <person name="Hauser L."/>
            <person name="Kyrpides N."/>
            <person name="Mikhailova N."/>
            <person name="Balakrishnan V."/>
            <person name="Glasner J."/>
            <person name="Perna N.T."/>
        </authorList>
    </citation>
    <scope>NUCLEOTIDE SEQUENCE [LARGE SCALE GENOMIC DNA]</scope>
    <source>
        <strain>PC1</strain>
    </source>
</reference>
<keyword id="KW-0963">Cytoplasm</keyword>
<keyword id="KW-0275">Fatty acid biosynthesis</keyword>
<keyword id="KW-0276">Fatty acid metabolism</keyword>
<keyword id="KW-0413">Isomerase</keyword>
<keyword id="KW-0444">Lipid biosynthesis</keyword>
<keyword id="KW-0443">Lipid metabolism</keyword>
<keyword id="KW-0456">Lyase</keyword>
<evidence type="ECO:0000255" key="1">
    <source>
        <dbReference type="HAMAP-Rule" id="MF_00405"/>
    </source>
</evidence>
<sequence>MVDKRESYTKEDLLASSRGELFGPQGPQLPAPNMLMMDRVVKMTEDGGKYGKGYVEAELDITPDLWFFGCHFIGDPVMPGCLGLDAMWQLVGFYLGWLGGEGKGRALGVGEVKFTGQVLPTAKKVTYRIHFKRVINRRLVMGIADGEVLVDGQQIYTADELKVGLFKDTSSF</sequence>
<feature type="chain" id="PRO_1000205935" description="3-hydroxydecanoyl-[acyl-carrier-protein] dehydratase">
    <location>
        <begin position="1"/>
        <end position="172"/>
    </location>
</feature>
<feature type="active site" evidence="1">
    <location>
        <position position="71"/>
    </location>
</feature>
<name>FABA_PECCP</name>
<dbReference type="EC" id="4.2.1.59" evidence="1"/>
<dbReference type="EC" id="5.3.3.14" evidence="1"/>
<dbReference type="EMBL" id="CP001657">
    <property type="protein sequence ID" value="ACT13583.1"/>
    <property type="molecule type" value="Genomic_DNA"/>
</dbReference>
<dbReference type="RefSeq" id="WP_005970620.1">
    <property type="nucleotide sequence ID" value="NC_012917.1"/>
</dbReference>
<dbReference type="SMR" id="C6DKY2"/>
<dbReference type="STRING" id="561230.PC1_2552"/>
<dbReference type="GeneID" id="67794550"/>
<dbReference type="KEGG" id="pct:PC1_2552"/>
<dbReference type="eggNOG" id="COG0764">
    <property type="taxonomic scope" value="Bacteria"/>
</dbReference>
<dbReference type="HOGENOM" id="CLU_097925_0_0_6"/>
<dbReference type="OrthoDB" id="9786735at2"/>
<dbReference type="UniPathway" id="UPA00094"/>
<dbReference type="Proteomes" id="UP000002736">
    <property type="component" value="Chromosome"/>
</dbReference>
<dbReference type="GO" id="GO:0005737">
    <property type="term" value="C:cytoplasm"/>
    <property type="evidence" value="ECO:0007669"/>
    <property type="project" value="UniProtKB-SubCell"/>
</dbReference>
<dbReference type="GO" id="GO:0019171">
    <property type="term" value="F:(3R)-hydroxyacyl-[acyl-carrier-protein] dehydratase activity"/>
    <property type="evidence" value="ECO:0007669"/>
    <property type="project" value="UniProtKB-UniRule"/>
</dbReference>
<dbReference type="GO" id="GO:0034017">
    <property type="term" value="F:trans-2-decenoyl-acyl-carrier-protein isomerase activity"/>
    <property type="evidence" value="ECO:0007669"/>
    <property type="project" value="UniProtKB-UniRule"/>
</dbReference>
<dbReference type="GO" id="GO:0006636">
    <property type="term" value="P:unsaturated fatty acid biosynthetic process"/>
    <property type="evidence" value="ECO:0007669"/>
    <property type="project" value="UniProtKB-UniRule"/>
</dbReference>
<dbReference type="CDD" id="cd01287">
    <property type="entry name" value="FabA"/>
    <property type="match status" value="1"/>
</dbReference>
<dbReference type="FunFam" id="3.10.129.10:FF:000003">
    <property type="entry name" value="3-hydroxydecanoyl-[acyl-carrier-protein] dehydratase"/>
    <property type="match status" value="1"/>
</dbReference>
<dbReference type="Gene3D" id="3.10.129.10">
    <property type="entry name" value="Hotdog Thioesterase"/>
    <property type="match status" value="1"/>
</dbReference>
<dbReference type="HAMAP" id="MF_00405">
    <property type="entry name" value="FabA"/>
    <property type="match status" value="1"/>
</dbReference>
<dbReference type="InterPro" id="IPR010083">
    <property type="entry name" value="FabA"/>
</dbReference>
<dbReference type="InterPro" id="IPR013114">
    <property type="entry name" value="FabA_FabZ"/>
</dbReference>
<dbReference type="InterPro" id="IPR029069">
    <property type="entry name" value="HotDog_dom_sf"/>
</dbReference>
<dbReference type="NCBIfam" id="TIGR01749">
    <property type="entry name" value="fabA"/>
    <property type="match status" value="1"/>
</dbReference>
<dbReference type="NCBIfam" id="NF003509">
    <property type="entry name" value="PRK05174.1"/>
    <property type="match status" value="1"/>
</dbReference>
<dbReference type="PANTHER" id="PTHR30272">
    <property type="entry name" value="3-HYDROXYACYL-[ACYL-CARRIER-PROTEIN] DEHYDRATASE"/>
    <property type="match status" value="1"/>
</dbReference>
<dbReference type="PANTHER" id="PTHR30272:SF8">
    <property type="entry name" value="3-HYDROXYDECANOYL-[ACYL-CARRIER-PROTEIN] DEHYDRATASE"/>
    <property type="match status" value="1"/>
</dbReference>
<dbReference type="Pfam" id="PF07977">
    <property type="entry name" value="FabA"/>
    <property type="match status" value="1"/>
</dbReference>
<dbReference type="SUPFAM" id="SSF54637">
    <property type="entry name" value="Thioesterase/thiol ester dehydrase-isomerase"/>
    <property type="match status" value="1"/>
</dbReference>
<protein>
    <recommendedName>
        <fullName evidence="1">3-hydroxydecanoyl-[acyl-carrier-protein] dehydratase</fullName>
        <ecNumber evidence="1">4.2.1.59</ecNumber>
    </recommendedName>
    <alternativeName>
        <fullName evidence="1">3-hydroxyacyl-[acyl-carrier-protein] dehydratase FabA</fullName>
    </alternativeName>
    <alternativeName>
        <fullName evidence="1">Beta-hydroxydecanoyl thioester dehydrase</fullName>
    </alternativeName>
    <alternativeName>
        <fullName evidence="1">Trans-2-decenoyl-[acyl-carrier-protein] isomerase</fullName>
        <ecNumber evidence="1">5.3.3.14</ecNumber>
    </alternativeName>
</protein>
<accession>C6DKY2</accession>